<reference key="1">
    <citation type="journal article" date="2006" name="J. Bacteriol.">
        <title>Pathogenomic sequence analysis of Bacillus cereus and Bacillus thuringiensis isolates closely related to Bacillus anthracis.</title>
        <authorList>
            <person name="Han C.S."/>
            <person name="Xie G."/>
            <person name="Challacombe J.F."/>
            <person name="Altherr M.R."/>
            <person name="Bhotika S.S."/>
            <person name="Bruce D."/>
            <person name="Campbell C.S."/>
            <person name="Campbell M.L."/>
            <person name="Chen J."/>
            <person name="Chertkov O."/>
            <person name="Cleland C."/>
            <person name="Dimitrijevic M."/>
            <person name="Doggett N.A."/>
            <person name="Fawcett J.J."/>
            <person name="Glavina T."/>
            <person name="Goodwin L.A."/>
            <person name="Hill K.K."/>
            <person name="Hitchcock P."/>
            <person name="Jackson P.J."/>
            <person name="Keim P."/>
            <person name="Kewalramani A.R."/>
            <person name="Longmire J."/>
            <person name="Lucas S."/>
            <person name="Malfatti S."/>
            <person name="McMurry K."/>
            <person name="Meincke L.J."/>
            <person name="Misra M."/>
            <person name="Moseman B.L."/>
            <person name="Mundt M."/>
            <person name="Munk A.C."/>
            <person name="Okinaka R.T."/>
            <person name="Parson-Quintana B."/>
            <person name="Reilly L.P."/>
            <person name="Richardson P."/>
            <person name="Robinson D.L."/>
            <person name="Rubin E."/>
            <person name="Saunders E."/>
            <person name="Tapia R."/>
            <person name="Tesmer J.G."/>
            <person name="Thayer N."/>
            <person name="Thompson L.S."/>
            <person name="Tice H."/>
            <person name="Ticknor L.O."/>
            <person name="Wills P.L."/>
            <person name="Brettin T.S."/>
            <person name="Gilna P."/>
        </authorList>
    </citation>
    <scope>NUCLEOTIDE SEQUENCE [LARGE SCALE GENOMIC DNA]</scope>
    <source>
        <strain>97-27</strain>
    </source>
</reference>
<sequence length="225" mass="25259">MDKRISIAIDGPAAAGKSTVAKVVAKKLSYVYIDTGAMYRTITYAALEQKVDIENEEQLMEVVKNVKIEFQQGENTQLVFLNGQDVSEVIRTPEVTNRVSIVAKHRLVREEMVRRQQELAEKGGVVMDGRDIGTHVLPDAEVKIFMLASVEERAERRHLENMNKGFDSNLEQLKEEIAQRDKLDSEREVSPLKKADDALELDTTSLSIEEVVQKIMGIVSGVFAK</sequence>
<accession>Q6HL58</accession>
<protein>
    <recommendedName>
        <fullName evidence="1">Cytidylate kinase</fullName>
        <shortName evidence="1">CK</shortName>
        <ecNumber evidence="1">2.7.4.25</ecNumber>
    </recommendedName>
    <alternativeName>
        <fullName evidence="1">Cytidine monophosphate kinase</fullName>
        <shortName evidence="1">CMP kinase</shortName>
    </alternativeName>
</protein>
<dbReference type="EC" id="2.7.4.25" evidence="1"/>
<dbReference type="EMBL" id="AE017355">
    <property type="protein sequence ID" value="AAT63236.1"/>
    <property type="molecule type" value="Genomic_DNA"/>
</dbReference>
<dbReference type="RefSeq" id="WP_000361264.1">
    <property type="nucleotide sequence ID" value="NC_005957.1"/>
</dbReference>
<dbReference type="RefSeq" id="YP_035713.1">
    <property type="nucleotide sequence ID" value="NC_005957.1"/>
</dbReference>
<dbReference type="SMR" id="Q6HL58"/>
<dbReference type="GeneID" id="93009543"/>
<dbReference type="KEGG" id="btk:BT9727_1379"/>
<dbReference type="PATRIC" id="fig|281309.8.peg.1451"/>
<dbReference type="HOGENOM" id="CLU_079959_0_2_9"/>
<dbReference type="Proteomes" id="UP000001301">
    <property type="component" value="Chromosome"/>
</dbReference>
<dbReference type="GO" id="GO:0005829">
    <property type="term" value="C:cytosol"/>
    <property type="evidence" value="ECO:0007669"/>
    <property type="project" value="TreeGrafter"/>
</dbReference>
<dbReference type="GO" id="GO:0005524">
    <property type="term" value="F:ATP binding"/>
    <property type="evidence" value="ECO:0007669"/>
    <property type="project" value="UniProtKB-UniRule"/>
</dbReference>
<dbReference type="GO" id="GO:0036430">
    <property type="term" value="F:CMP kinase activity"/>
    <property type="evidence" value="ECO:0007669"/>
    <property type="project" value="RHEA"/>
</dbReference>
<dbReference type="GO" id="GO:0036431">
    <property type="term" value="F:dCMP kinase activity"/>
    <property type="evidence" value="ECO:0007669"/>
    <property type="project" value="RHEA"/>
</dbReference>
<dbReference type="GO" id="GO:0015949">
    <property type="term" value="P:nucleobase-containing small molecule interconversion"/>
    <property type="evidence" value="ECO:0007669"/>
    <property type="project" value="TreeGrafter"/>
</dbReference>
<dbReference type="GO" id="GO:0006220">
    <property type="term" value="P:pyrimidine nucleotide metabolic process"/>
    <property type="evidence" value="ECO:0007669"/>
    <property type="project" value="UniProtKB-UniRule"/>
</dbReference>
<dbReference type="CDD" id="cd02020">
    <property type="entry name" value="CMPK"/>
    <property type="match status" value="1"/>
</dbReference>
<dbReference type="FunFam" id="3.40.50.300:FF:000484">
    <property type="entry name" value="Cytidylate kinase"/>
    <property type="match status" value="1"/>
</dbReference>
<dbReference type="Gene3D" id="3.40.50.300">
    <property type="entry name" value="P-loop containing nucleotide triphosphate hydrolases"/>
    <property type="match status" value="1"/>
</dbReference>
<dbReference type="HAMAP" id="MF_00238">
    <property type="entry name" value="Cytidyl_kinase_type1"/>
    <property type="match status" value="1"/>
</dbReference>
<dbReference type="InterPro" id="IPR003136">
    <property type="entry name" value="Cytidylate_kin"/>
</dbReference>
<dbReference type="InterPro" id="IPR011994">
    <property type="entry name" value="Cytidylate_kinase_dom"/>
</dbReference>
<dbReference type="InterPro" id="IPR027417">
    <property type="entry name" value="P-loop_NTPase"/>
</dbReference>
<dbReference type="NCBIfam" id="TIGR00017">
    <property type="entry name" value="cmk"/>
    <property type="match status" value="1"/>
</dbReference>
<dbReference type="PANTHER" id="PTHR21299:SF2">
    <property type="entry name" value="CYTIDYLATE KINASE"/>
    <property type="match status" value="1"/>
</dbReference>
<dbReference type="PANTHER" id="PTHR21299">
    <property type="entry name" value="CYTIDYLATE KINASE/PANTOATE-BETA-ALANINE LIGASE"/>
    <property type="match status" value="1"/>
</dbReference>
<dbReference type="Pfam" id="PF02224">
    <property type="entry name" value="Cytidylate_kin"/>
    <property type="match status" value="1"/>
</dbReference>
<dbReference type="SUPFAM" id="SSF52540">
    <property type="entry name" value="P-loop containing nucleoside triphosphate hydrolases"/>
    <property type="match status" value="1"/>
</dbReference>
<name>KCY_BACHK</name>
<feature type="chain" id="PRO_0000131878" description="Cytidylate kinase">
    <location>
        <begin position="1"/>
        <end position="225"/>
    </location>
</feature>
<feature type="binding site" evidence="1">
    <location>
        <begin position="11"/>
        <end position="19"/>
    </location>
    <ligand>
        <name>ATP</name>
        <dbReference type="ChEBI" id="CHEBI:30616"/>
    </ligand>
</feature>
<comment type="catalytic activity">
    <reaction evidence="1">
        <text>CMP + ATP = CDP + ADP</text>
        <dbReference type="Rhea" id="RHEA:11600"/>
        <dbReference type="ChEBI" id="CHEBI:30616"/>
        <dbReference type="ChEBI" id="CHEBI:58069"/>
        <dbReference type="ChEBI" id="CHEBI:60377"/>
        <dbReference type="ChEBI" id="CHEBI:456216"/>
        <dbReference type="EC" id="2.7.4.25"/>
    </reaction>
</comment>
<comment type="catalytic activity">
    <reaction evidence="1">
        <text>dCMP + ATP = dCDP + ADP</text>
        <dbReference type="Rhea" id="RHEA:25094"/>
        <dbReference type="ChEBI" id="CHEBI:30616"/>
        <dbReference type="ChEBI" id="CHEBI:57566"/>
        <dbReference type="ChEBI" id="CHEBI:58593"/>
        <dbReference type="ChEBI" id="CHEBI:456216"/>
        <dbReference type="EC" id="2.7.4.25"/>
    </reaction>
</comment>
<comment type="subcellular location">
    <subcellularLocation>
        <location evidence="1">Cytoplasm</location>
    </subcellularLocation>
</comment>
<comment type="similarity">
    <text evidence="1">Belongs to the cytidylate kinase family. Type 1 subfamily.</text>
</comment>
<organism>
    <name type="scientific">Bacillus thuringiensis subsp. konkukian (strain 97-27)</name>
    <dbReference type="NCBI Taxonomy" id="281309"/>
    <lineage>
        <taxon>Bacteria</taxon>
        <taxon>Bacillati</taxon>
        <taxon>Bacillota</taxon>
        <taxon>Bacilli</taxon>
        <taxon>Bacillales</taxon>
        <taxon>Bacillaceae</taxon>
        <taxon>Bacillus</taxon>
        <taxon>Bacillus cereus group</taxon>
    </lineage>
</organism>
<evidence type="ECO:0000255" key="1">
    <source>
        <dbReference type="HAMAP-Rule" id="MF_00238"/>
    </source>
</evidence>
<keyword id="KW-0067">ATP-binding</keyword>
<keyword id="KW-0963">Cytoplasm</keyword>
<keyword id="KW-0418">Kinase</keyword>
<keyword id="KW-0547">Nucleotide-binding</keyword>
<keyword id="KW-0808">Transferase</keyword>
<gene>
    <name evidence="1" type="primary">cmk</name>
    <name type="ordered locus">BT9727_1379</name>
</gene>
<proteinExistence type="inferred from homology"/>